<feature type="chain" id="PRO_0000344722" description="Large ribosomal subunit protein bL36A">
    <location>
        <begin position="1"/>
        <end position="46"/>
    </location>
</feature>
<gene>
    <name evidence="1" type="primary">rpmJ1</name>
    <name type="ordered locus">SG0683</name>
</gene>
<comment type="similarity">
    <text evidence="1">Belongs to the bacterial ribosomal protein bL36 family.</text>
</comment>
<organism>
    <name type="scientific">Sodalis glossinidius (strain morsitans)</name>
    <dbReference type="NCBI Taxonomy" id="343509"/>
    <lineage>
        <taxon>Bacteria</taxon>
        <taxon>Pseudomonadati</taxon>
        <taxon>Pseudomonadota</taxon>
        <taxon>Gammaproteobacteria</taxon>
        <taxon>Enterobacterales</taxon>
        <taxon>Bruguierivoracaceae</taxon>
        <taxon>Sodalis</taxon>
    </lineage>
</organism>
<dbReference type="EMBL" id="AP008232">
    <property type="protein sequence ID" value="BAE73958.1"/>
    <property type="molecule type" value="Genomic_DNA"/>
</dbReference>
<dbReference type="RefSeq" id="WP_011410546.1">
    <property type="nucleotide sequence ID" value="NC_007712.1"/>
</dbReference>
<dbReference type="SMR" id="Q2NV67"/>
<dbReference type="STRING" id="343509.SG0683"/>
<dbReference type="KEGG" id="sgl:SG0683"/>
<dbReference type="eggNOG" id="COG0257">
    <property type="taxonomic scope" value="Bacteria"/>
</dbReference>
<dbReference type="HOGENOM" id="CLU_135723_3_1_6"/>
<dbReference type="OrthoDB" id="9801558at2"/>
<dbReference type="BioCyc" id="SGLO343509:SGP1_RS05840-MONOMER"/>
<dbReference type="Proteomes" id="UP000001932">
    <property type="component" value="Chromosome"/>
</dbReference>
<dbReference type="GO" id="GO:1990904">
    <property type="term" value="C:ribonucleoprotein complex"/>
    <property type="evidence" value="ECO:0007669"/>
    <property type="project" value="UniProtKB-KW"/>
</dbReference>
<dbReference type="GO" id="GO:0005840">
    <property type="term" value="C:ribosome"/>
    <property type="evidence" value="ECO:0007669"/>
    <property type="project" value="UniProtKB-KW"/>
</dbReference>
<dbReference type="GO" id="GO:0003735">
    <property type="term" value="F:structural constituent of ribosome"/>
    <property type="evidence" value="ECO:0007669"/>
    <property type="project" value="InterPro"/>
</dbReference>
<dbReference type="GO" id="GO:0006412">
    <property type="term" value="P:translation"/>
    <property type="evidence" value="ECO:0007669"/>
    <property type="project" value="UniProtKB-UniRule"/>
</dbReference>
<dbReference type="HAMAP" id="MF_00251">
    <property type="entry name" value="Ribosomal_bL36"/>
    <property type="match status" value="1"/>
</dbReference>
<dbReference type="InterPro" id="IPR000473">
    <property type="entry name" value="Ribosomal_bL36"/>
</dbReference>
<dbReference type="InterPro" id="IPR035977">
    <property type="entry name" value="Ribosomal_bL36_sp"/>
</dbReference>
<dbReference type="InterPro" id="IPR047621">
    <property type="entry name" value="Ribosomal_L36_bact"/>
</dbReference>
<dbReference type="NCBIfam" id="NF002021">
    <property type="entry name" value="PRK00831.1"/>
    <property type="match status" value="1"/>
</dbReference>
<dbReference type="NCBIfam" id="TIGR01022">
    <property type="entry name" value="rpmJ_bact"/>
    <property type="match status" value="1"/>
</dbReference>
<dbReference type="PANTHER" id="PTHR47781">
    <property type="entry name" value="50S RIBOSOMAL PROTEIN L36 2"/>
    <property type="match status" value="1"/>
</dbReference>
<dbReference type="PANTHER" id="PTHR47781:SF1">
    <property type="entry name" value="LARGE RIBOSOMAL SUBUNIT PROTEIN BL36B"/>
    <property type="match status" value="1"/>
</dbReference>
<dbReference type="Pfam" id="PF00444">
    <property type="entry name" value="Ribosomal_L36"/>
    <property type="match status" value="1"/>
</dbReference>
<dbReference type="SUPFAM" id="SSF57840">
    <property type="entry name" value="Ribosomal protein L36"/>
    <property type="match status" value="1"/>
</dbReference>
<protein>
    <recommendedName>
        <fullName evidence="1">Large ribosomal subunit protein bL36A</fullName>
    </recommendedName>
    <alternativeName>
        <fullName evidence="2">50S ribosomal protein L36 1</fullName>
    </alternativeName>
</protein>
<keyword id="KW-0687">Ribonucleoprotein</keyword>
<keyword id="KW-0689">Ribosomal protein</keyword>
<sequence>MKVLSSLASAKTRYPDCQVVRRRGRVYVICKSNPRFKAVQGRKKRR</sequence>
<evidence type="ECO:0000255" key="1">
    <source>
        <dbReference type="HAMAP-Rule" id="MF_00251"/>
    </source>
</evidence>
<evidence type="ECO:0000305" key="2"/>
<reference key="1">
    <citation type="journal article" date="2006" name="Genome Res.">
        <title>Massive genome erosion and functional adaptations provide insights into the symbiotic lifestyle of Sodalis glossinidius in the tsetse host.</title>
        <authorList>
            <person name="Toh H."/>
            <person name="Weiss B.L."/>
            <person name="Perkin S.A.H."/>
            <person name="Yamashita A."/>
            <person name="Oshima K."/>
            <person name="Hattori M."/>
            <person name="Aksoy S."/>
        </authorList>
    </citation>
    <scope>NUCLEOTIDE SEQUENCE [LARGE SCALE GENOMIC DNA]</scope>
    <source>
        <strain>morsitans</strain>
    </source>
</reference>
<accession>Q2NV67</accession>
<name>RL361_SODGM</name>
<proteinExistence type="inferred from homology"/>